<name>RBSK_LACLA</name>
<dbReference type="EC" id="2.7.1.15" evidence="1"/>
<dbReference type="EMBL" id="AE005176">
    <property type="protein sequence ID" value="AAK05737.1"/>
    <property type="molecule type" value="Genomic_DNA"/>
</dbReference>
<dbReference type="PIR" id="G86829">
    <property type="entry name" value="G86829"/>
</dbReference>
<dbReference type="RefSeq" id="NP_267795.1">
    <property type="nucleotide sequence ID" value="NC_002662.1"/>
</dbReference>
<dbReference type="RefSeq" id="WP_010906072.1">
    <property type="nucleotide sequence ID" value="NC_002662.1"/>
</dbReference>
<dbReference type="SMR" id="Q9CF42"/>
<dbReference type="PaxDb" id="272623-L86157"/>
<dbReference type="EnsemblBacteria" id="AAK05737">
    <property type="protein sequence ID" value="AAK05737"/>
    <property type="gene ID" value="L86157"/>
</dbReference>
<dbReference type="KEGG" id="lla:L86157"/>
<dbReference type="PATRIC" id="fig|272623.7.peg.1761"/>
<dbReference type="eggNOG" id="COG0524">
    <property type="taxonomic scope" value="Bacteria"/>
</dbReference>
<dbReference type="HOGENOM" id="CLU_027634_2_2_9"/>
<dbReference type="OrthoDB" id="9775849at2"/>
<dbReference type="UniPathway" id="UPA00916">
    <property type="reaction ID" value="UER00889"/>
</dbReference>
<dbReference type="Proteomes" id="UP000002196">
    <property type="component" value="Chromosome"/>
</dbReference>
<dbReference type="GO" id="GO:0005829">
    <property type="term" value="C:cytosol"/>
    <property type="evidence" value="ECO:0007669"/>
    <property type="project" value="TreeGrafter"/>
</dbReference>
<dbReference type="GO" id="GO:0005524">
    <property type="term" value="F:ATP binding"/>
    <property type="evidence" value="ECO:0007669"/>
    <property type="project" value="UniProtKB-UniRule"/>
</dbReference>
<dbReference type="GO" id="GO:0046872">
    <property type="term" value="F:metal ion binding"/>
    <property type="evidence" value="ECO:0007669"/>
    <property type="project" value="UniProtKB-KW"/>
</dbReference>
<dbReference type="GO" id="GO:0004747">
    <property type="term" value="F:ribokinase activity"/>
    <property type="evidence" value="ECO:0007669"/>
    <property type="project" value="UniProtKB-UniRule"/>
</dbReference>
<dbReference type="GO" id="GO:0019303">
    <property type="term" value="P:D-ribose catabolic process"/>
    <property type="evidence" value="ECO:0007669"/>
    <property type="project" value="UniProtKB-UniRule"/>
</dbReference>
<dbReference type="CDD" id="cd01174">
    <property type="entry name" value="ribokinase"/>
    <property type="match status" value="1"/>
</dbReference>
<dbReference type="Gene3D" id="3.40.1190.20">
    <property type="match status" value="1"/>
</dbReference>
<dbReference type="HAMAP" id="MF_01987">
    <property type="entry name" value="Ribokinase"/>
    <property type="match status" value="1"/>
</dbReference>
<dbReference type="InterPro" id="IPR002173">
    <property type="entry name" value="Carboh/pur_kinase_PfkB_CS"/>
</dbReference>
<dbReference type="InterPro" id="IPR011611">
    <property type="entry name" value="PfkB_dom"/>
</dbReference>
<dbReference type="InterPro" id="IPR002139">
    <property type="entry name" value="Ribo/fructo_kinase"/>
</dbReference>
<dbReference type="InterPro" id="IPR011877">
    <property type="entry name" value="Ribokinase"/>
</dbReference>
<dbReference type="InterPro" id="IPR029056">
    <property type="entry name" value="Ribokinase-like"/>
</dbReference>
<dbReference type="NCBIfam" id="TIGR02152">
    <property type="entry name" value="D_ribokin_bact"/>
    <property type="match status" value="1"/>
</dbReference>
<dbReference type="PANTHER" id="PTHR10584:SF166">
    <property type="entry name" value="RIBOKINASE"/>
    <property type="match status" value="1"/>
</dbReference>
<dbReference type="PANTHER" id="PTHR10584">
    <property type="entry name" value="SUGAR KINASE"/>
    <property type="match status" value="1"/>
</dbReference>
<dbReference type="Pfam" id="PF00294">
    <property type="entry name" value="PfkB"/>
    <property type="match status" value="1"/>
</dbReference>
<dbReference type="PRINTS" id="PR00990">
    <property type="entry name" value="RIBOKINASE"/>
</dbReference>
<dbReference type="SUPFAM" id="SSF53613">
    <property type="entry name" value="Ribokinase-like"/>
    <property type="match status" value="1"/>
</dbReference>
<dbReference type="PROSITE" id="PS00584">
    <property type="entry name" value="PFKB_KINASES_2"/>
    <property type="match status" value="1"/>
</dbReference>
<feature type="chain" id="PRO_0000080100" description="Ribokinase">
    <location>
        <begin position="1"/>
        <end position="300"/>
    </location>
</feature>
<feature type="active site" description="Proton acceptor" evidence="1">
    <location>
        <position position="242"/>
    </location>
</feature>
<feature type="binding site" evidence="1">
    <location>
        <begin position="11"/>
        <end position="13"/>
    </location>
    <ligand>
        <name>substrate</name>
    </ligand>
</feature>
<feature type="binding site" evidence="1">
    <location>
        <begin position="39"/>
        <end position="43"/>
    </location>
    <ligand>
        <name>substrate</name>
    </ligand>
</feature>
<feature type="binding site" evidence="1">
    <location>
        <position position="139"/>
    </location>
    <ligand>
        <name>substrate</name>
    </ligand>
</feature>
<feature type="binding site" evidence="1">
    <location>
        <position position="183"/>
    </location>
    <ligand>
        <name>ATP</name>
        <dbReference type="ChEBI" id="CHEBI:30616"/>
    </ligand>
</feature>
<feature type="binding site" evidence="1">
    <location>
        <begin position="210"/>
        <end position="215"/>
    </location>
    <ligand>
        <name>ATP</name>
        <dbReference type="ChEBI" id="CHEBI:30616"/>
    </ligand>
</feature>
<feature type="binding site" evidence="1">
    <location>
        <position position="236"/>
    </location>
    <ligand>
        <name>K(+)</name>
        <dbReference type="ChEBI" id="CHEBI:29103"/>
    </ligand>
</feature>
<feature type="binding site" evidence="1">
    <location>
        <position position="238"/>
    </location>
    <ligand>
        <name>K(+)</name>
        <dbReference type="ChEBI" id="CHEBI:29103"/>
    </ligand>
</feature>
<feature type="binding site" evidence="1">
    <location>
        <begin position="241"/>
        <end position="242"/>
    </location>
    <ligand>
        <name>ATP</name>
        <dbReference type="ChEBI" id="CHEBI:30616"/>
    </ligand>
</feature>
<feature type="binding site" evidence="1">
    <location>
        <position position="242"/>
    </location>
    <ligand>
        <name>substrate</name>
    </ligand>
</feature>
<feature type="binding site" evidence="1">
    <location>
        <position position="272"/>
    </location>
    <ligand>
        <name>K(+)</name>
        <dbReference type="ChEBI" id="CHEBI:29103"/>
    </ligand>
</feature>
<feature type="binding site" evidence="1">
    <location>
        <position position="275"/>
    </location>
    <ligand>
        <name>K(+)</name>
        <dbReference type="ChEBI" id="CHEBI:29103"/>
    </ligand>
</feature>
<feature type="binding site" evidence="1">
    <location>
        <position position="277"/>
    </location>
    <ligand>
        <name>K(+)</name>
        <dbReference type="ChEBI" id="CHEBI:29103"/>
    </ligand>
</feature>
<reference key="1">
    <citation type="journal article" date="2001" name="Genome Res.">
        <title>The complete genome sequence of the lactic acid bacterium Lactococcus lactis ssp. lactis IL1403.</title>
        <authorList>
            <person name="Bolotin A."/>
            <person name="Wincker P."/>
            <person name="Mauger S."/>
            <person name="Jaillon O."/>
            <person name="Malarme K."/>
            <person name="Weissenbach J."/>
            <person name="Ehrlich S.D."/>
            <person name="Sorokin A."/>
        </authorList>
    </citation>
    <scope>NUCLEOTIDE SEQUENCE [LARGE SCALE GENOMIC DNA]</scope>
    <source>
        <strain>IL1403</strain>
    </source>
</reference>
<proteinExistence type="inferred from homology"/>
<evidence type="ECO:0000255" key="1">
    <source>
        <dbReference type="HAMAP-Rule" id="MF_01987"/>
    </source>
</evidence>
<organism>
    <name type="scientific">Lactococcus lactis subsp. lactis (strain IL1403)</name>
    <name type="common">Streptococcus lactis</name>
    <dbReference type="NCBI Taxonomy" id="272623"/>
    <lineage>
        <taxon>Bacteria</taxon>
        <taxon>Bacillati</taxon>
        <taxon>Bacillota</taxon>
        <taxon>Bacilli</taxon>
        <taxon>Lactobacillales</taxon>
        <taxon>Streptococcaceae</taxon>
        <taxon>Lactococcus</taxon>
    </lineage>
</organism>
<gene>
    <name evidence="1" type="primary">rbsK</name>
    <name type="ordered locus">LL1639</name>
    <name type="ORF">L86157</name>
</gene>
<accession>Q9CF42</accession>
<comment type="function">
    <text evidence="1">Catalyzes the phosphorylation of ribose at O-5 in a reaction requiring ATP and magnesium. The resulting D-ribose-5-phosphate can then be used either for sythesis of nucleotides, histidine, and tryptophan, or as a component of the pentose phosphate pathway.</text>
</comment>
<comment type="catalytic activity">
    <reaction evidence="1">
        <text>D-ribose + ATP = D-ribose 5-phosphate + ADP + H(+)</text>
        <dbReference type="Rhea" id="RHEA:13697"/>
        <dbReference type="ChEBI" id="CHEBI:15378"/>
        <dbReference type="ChEBI" id="CHEBI:30616"/>
        <dbReference type="ChEBI" id="CHEBI:47013"/>
        <dbReference type="ChEBI" id="CHEBI:78346"/>
        <dbReference type="ChEBI" id="CHEBI:456216"/>
        <dbReference type="EC" id="2.7.1.15"/>
    </reaction>
</comment>
<comment type="cofactor">
    <cofactor evidence="1">
        <name>Mg(2+)</name>
        <dbReference type="ChEBI" id="CHEBI:18420"/>
    </cofactor>
    <text evidence="1">Requires a divalent cation, most likely magnesium in vivo, as an electrophilic catalyst to aid phosphoryl group transfer. It is the chelate of the metal and the nucleotide that is the actual substrate.</text>
</comment>
<comment type="activity regulation">
    <text evidence="1">Activated by a monovalent cation that binds near, but not in, the active site. The most likely occupant of the site in vivo is potassium. Ion binding induces a conformational change that may alter substrate affinity.</text>
</comment>
<comment type="pathway">
    <text evidence="1">Carbohydrate metabolism; D-ribose degradation; D-ribose 5-phosphate from beta-D-ribopyranose: step 2/2.</text>
</comment>
<comment type="subunit">
    <text evidence="1">Homodimer.</text>
</comment>
<comment type="subcellular location">
    <subcellularLocation>
        <location evidence="1">Cytoplasm</location>
    </subcellularLocation>
</comment>
<comment type="similarity">
    <text evidence="1">Belongs to the carbohydrate kinase PfkB family. Ribokinase subfamily.</text>
</comment>
<protein>
    <recommendedName>
        <fullName evidence="1">Ribokinase</fullName>
        <shortName evidence="1">RK</shortName>
        <ecNumber evidence="1">2.7.1.15</ecNumber>
    </recommendedName>
</protein>
<keyword id="KW-0067">ATP-binding</keyword>
<keyword id="KW-0119">Carbohydrate metabolism</keyword>
<keyword id="KW-0963">Cytoplasm</keyword>
<keyword id="KW-0418">Kinase</keyword>
<keyword id="KW-0460">Magnesium</keyword>
<keyword id="KW-0479">Metal-binding</keyword>
<keyword id="KW-0547">Nucleotide-binding</keyword>
<keyword id="KW-0630">Potassium</keyword>
<keyword id="KW-1185">Reference proteome</keyword>
<keyword id="KW-0808">Transferase</keyword>
<sequence>MTKVSVIGSISMDLVTRTNRVPNAGETVFGEDFAMVPGGKGANQAVAFARLSPNEVSMIGAVGKDAFGESILQNFKENAVLFENVGTVPQTTGIAQITLYDDDNRIIIIPGANNEVLPSYLADLWEKIKESQLVILQNEIPHETNLAIAKFCKENAIKVLYNPAPARKTDLEMIDFVDYITPNEHECKELFPNLALEEILKKYSNRLIVTLGSEGVIFHDGETLQKIPAIKAKVVDTTGAGDTFNGAFAFGLTENLSISDSIRLAVVASHLSIQKFGAQGGMPKLSEVKAKLKELEINLY</sequence>